<protein>
    <recommendedName>
        <fullName evidence="4">MFS glucose transporter mfs1</fullName>
    </recommendedName>
    <alternativeName>
        <fullName evidence="4">Asparasone A synthesis protein mfs1</fullName>
    </alternativeName>
</protein>
<proteinExistence type="evidence at transcript level"/>
<organism>
    <name type="scientific">Aspergillus flavus (strain ATCC 200026 / FGSC A1120 / IAM 13836 / NRRL 3357 / JCM 12722 / SRRC 167)</name>
    <dbReference type="NCBI Taxonomy" id="332952"/>
    <lineage>
        <taxon>Eukaryota</taxon>
        <taxon>Fungi</taxon>
        <taxon>Dikarya</taxon>
        <taxon>Ascomycota</taxon>
        <taxon>Pezizomycotina</taxon>
        <taxon>Eurotiomycetes</taxon>
        <taxon>Eurotiomycetidae</taxon>
        <taxon>Eurotiales</taxon>
        <taxon>Aspergillaceae</taxon>
        <taxon>Aspergillus</taxon>
        <taxon>Aspergillus subgen. Circumdati</taxon>
    </lineage>
</organism>
<comment type="function">
    <text evidence="2">Probable MFS glucose transporter; part of the gene cluster 27 that mediates the biosynthesis of asparasone A, a sclerotium-specific anthraquinone pigment important for sclerotial survival (PubMed:24412484).</text>
</comment>
<comment type="subcellular location">
    <subcellularLocation>
        <location evidence="1">Membrane</location>
        <topology evidence="1">Multi-pass membrane protein</topology>
    </subcellularLocation>
</comment>
<comment type="induction">
    <text evidence="2">Expression is induced by the developmental and secondary metabolism regulator veA (PubMed:24412484).</text>
</comment>
<comment type="similarity">
    <text evidence="4">Belongs to the major facilitator superfamily. Sugar transporter (TC 2.A.1.1) family.</text>
</comment>
<gene>
    <name evidence="3" type="primary">mfs1</name>
    <name type="ORF">AFLA_082160</name>
</gene>
<keyword id="KW-0472">Membrane</keyword>
<keyword id="KW-0762">Sugar transport</keyword>
<keyword id="KW-0812">Transmembrane</keyword>
<keyword id="KW-1133">Transmembrane helix</keyword>
<keyword id="KW-0813">Transport</keyword>
<reference key="1">
    <citation type="journal article" date="2015" name="Genome Announc.">
        <title>Genome sequence of Aspergillus flavus NRRL 3357, a strain that causes aflatoxin contamination of food and feed.</title>
        <authorList>
            <person name="Nierman W.C."/>
            <person name="Yu J."/>
            <person name="Fedorova-Abrams N.D."/>
            <person name="Losada L."/>
            <person name="Cleveland T.E."/>
            <person name="Bhatnagar D."/>
            <person name="Bennett J.W."/>
            <person name="Dean R."/>
            <person name="Payne G.A."/>
        </authorList>
    </citation>
    <scope>NUCLEOTIDE SEQUENCE [LARGE SCALE GENOMIC DNA]</scope>
    <source>
        <strain>ATCC 200026 / FGSC A1120 / IAM 13836 / NRRL 3357 / JCM 12722 / SRRC 167</strain>
    </source>
</reference>
<reference key="2">
    <citation type="journal article" date="2014" name="Fungal Genet. Biol.">
        <title>Functional characterization of a veA-dependent polyketide synthase gene in Aspergillus flavus necessary for the synthesis of asparasone, a sclerotium-specific pigment.</title>
        <authorList>
            <person name="Cary J.W."/>
            <person name="Harris-Coward P.Y."/>
            <person name="Ehrlich K.C."/>
            <person name="Di Mavungu J.D."/>
            <person name="Malysheva S.V."/>
            <person name="De Saeger S."/>
            <person name="Dowd P.F."/>
            <person name="Shantappa S."/>
            <person name="Martens S.L."/>
            <person name="Calvo A.M."/>
        </authorList>
    </citation>
    <scope>INDUCTION</scope>
</reference>
<name>MF127_ASPFN</name>
<dbReference type="EMBL" id="EQ963472">
    <property type="protein sequence ID" value="EED57519.1"/>
    <property type="molecule type" value="Genomic_DNA"/>
</dbReference>
<dbReference type="RefSeq" id="XP_002373131.1">
    <property type="nucleotide sequence ID" value="XM_002373090.1"/>
</dbReference>
<dbReference type="SMR" id="B8MYS7"/>
<dbReference type="STRING" id="332952.B8MYS7"/>
<dbReference type="EnsemblFungi" id="EED57519">
    <property type="protein sequence ID" value="EED57519"/>
    <property type="gene ID" value="AFLA_082160"/>
</dbReference>
<dbReference type="VEuPathDB" id="FungiDB:AFLA_003782"/>
<dbReference type="eggNOG" id="KOG0254">
    <property type="taxonomic scope" value="Eukaryota"/>
</dbReference>
<dbReference type="HOGENOM" id="CLU_001265_30_12_1"/>
<dbReference type="OMA" id="TGSHMES"/>
<dbReference type="GO" id="GO:0016020">
    <property type="term" value="C:membrane"/>
    <property type="evidence" value="ECO:0007669"/>
    <property type="project" value="UniProtKB-SubCell"/>
</dbReference>
<dbReference type="GO" id="GO:0005351">
    <property type="term" value="F:carbohydrate:proton symporter activity"/>
    <property type="evidence" value="ECO:0007669"/>
    <property type="project" value="TreeGrafter"/>
</dbReference>
<dbReference type="CDD" id="cd17356">
    <property type="entry name" value="MFS_HXT"/>
    <property type="match status" value="1"/>
</dbReference>
<dbReference type="FunFam" id="1.20.1250.20:FF:000026">
    <property type="entry name" value="MFS quinate transporter QutD"/>
    <property type="match status" value="1"/>
</dbReference>
<dbReference type="Gene3D" id="1.20.1250.20">
    <property type="entry name" value="MFS general substrate transporter like domains"/>
    <property type="match status" value="1"/>
</dbReference>
<dbReference type="InterPro" id="IPR020846">
    <property type="entry name" value="MFS_dom"/>
</dbReference>
<dbReference type="InterPro" id="IPR005828">
    <property type="entry name" value="MFS_sugar_transport-like"/>
</dbReference>
<dbReference type="InterPro" id="IPR050360">
    <property type="entry name" value="MFS_Sugar_Transporters"/>
</dbReference>
<dbReference type="InterPro" id="IPR036259">
    <property type="entry name" value="MFS_trans_sf"/>
</dbReference>
<dbReference type="InterPro" id="IPR003663">
    <property type="entry name" value="Sugar/inositol_transpt"/>
</dbReference>
<dbReference type="InterPro" id="IPR005829">
    <property type="entry name" value="Sugar_transporter_CS"/>
</dbReference>
<dbReference type="NCBIfam" id="TIGR00879">
    <property type="entry name" value="SP"/>
    <property type="match status" value="1"/>
</dbReference>
<dbReference type="PANTHER" id="PTHR48022:SF35">
    <property type="entry name" value="MAJOR FACILITATOR SUPERFAMILY (MFS) PROFILE DOMAIN-CONTAINING PROTEIN"/>
    <property type="match status" value="1"/>
</dbReference>
<dbReference type="PANTHER" id="PTHR48022">
    <property type="entry name" value="PLASTIDIC GLUCOSE TRANSPORTER 4"/>
    <property type="match status" value="1"/>
</dbReference>
<dbReference type="Pfam" id="PF00083">
    <property type="entry name" value="Sugar_tr"/>
    <property type="match status" value="1"/>
</dbReference>
<dbReference type="PRINTS" id="PR00171">
    <property type="entry name" value="SUGRTRNSPORT"/>
</dbReference>
<dbReference type="SUPFAM" id="SSF103473">
    <property type="entry name" value="MFS general substrate transporter"/>
    <property type="match status" value="1"/>
</dbReference>
<dbReference type="PROSITE" id="PS50850">
    <property type="entry name" value="MFS"/>
    <property type="match status" value="1"/>
</dbReference>
<dbReference type="PROSITE" id="PS00216">
    <property type="entry name" value="SUGAR_TRANSPORT_1"/>
    <property type="match status" value="1"/>
</dbReference>
<sequence length="529" mass="58332">MKKIYNVYFLCGFATLGGGLFGFDISSMSGVLGTAAYTNYFQVGSGQYKQGSITCAMPFGSLVGALCSSFIADRYSRVRAIQFSSILWIIGSIFMCASNGIPLLVVGRVIAGGCVGIASAMVPVYQAEIAPKEIRGRVISLQQWAITWGILIQYFIQYGASNIDGGPNNPTQSTAAFRIPWGIQIVPGVILFFGMFLFPKSPRWLASKDRWEEALQVLSKLHGQGDVNHPKVLAEYKEIQEALALEREQSATGFQELIKPRIFKRVILGMSLQMWSQLCGMNVMMYYIVYIMQSTGAGSPLLTASIQYILNTALTLPAIIYLDKFGRRPAILIGFFLQAIFLYLEGGLQGGFGAPNPHTDPKLDAISWTVADHPAVGKAIIALSYLFVCSFATTIGPTSWTYPAEIYPAKVRAKAVSLATASNWIWNCLLALFVPPLLWSINWKMYMIFAAFNTAAFIHMFLTAPETKGYTLEEMDDVFDSGLPAWRKLERKSRMEELEKEIIEGNLKITPAHEATGVSATHVTPEKQV</sequence>
<evidence type="ECO:0000255" key="1"/>
<evidence type="ECO:0000269" key="2">
    <source>
    </source>
</evidence>
<evidence type="ECO:0000303" key="3">
    <source>
    </source>
</evidence>
<evidence type="ECO:0000305" key="4"/>
<feature type="chain" id="PRO_0000436130" description="MFS glucose transporter mfs1">
    <location>
        <begin position="1"/>
        <end position="529"/>
    </location>
</feature>
<feature type="transmembrane region" description="Helical" evidence="1">
    <location>
        <begin position="7"/>
        <end position="27"/>
    </location>
</feature>
<feature type="transmembrane region" description="Helical" evidence="1">
    <location>
        <begin position="52"/>
        <end position="72"/>
    </location>
</feature>
<feature type="transmembrane region" description="Helical" evidence="1">
    <location>
        <begin position="86"/>
        <end position="106"/>
    </location>
</feature>
<feature type="transmembrane region" description="Helical" evidence="1">
    <location>
        <begin position="109"/>
        <end position="129"/>
    </location>
</feature>
<feature type="transmembrane region" description="Helical" evidence="1">
    <location>
        <begin position="138"/>
        <end position="158"/>
    </location>
</feature>
<feature type="transmembrane region" description="Helical" evidence="1">
    <location>
        <begin position="179"/>
        <end position="199"/>
    </location>
</feature>
<feature type="transmembrane region" description="Helical" evidence="1">
    <location>
        <begin position="272"/>
        <end position="292"/>
    </location>
</feature>
<feature type="transmembrane region" description="Helical" evidence="1">
    <location>
        <begin position="301"/>
        <end position="321"/>
    </location>
</feature>
<feature type="transmembrane region" description="Helical" evidence="1">
    <location>
        <begin position="330"/>
        <end position="350"/>
    </location>
</feature>
<feature type="transmembrane region" description="Helical" evidence="1">
    <location>
        <begin position="375"/>
        <end position="395"/>
    </location>
</feature>
<feature type="transmembrane region" description="Helical" evidence="1">
    <location>
        <begin position="415"/>
        <end position="439"/>
    </location>
</feature>
<feature type="transmembrane region" description="Helical" evidence="1">
    <location>
        <begin position="446"/>
        <end position="464"/>
    </location>
</feature>
<accession>B8MYS7</accession>